<dbReference type="EC" id="2.7.7.8" evidence="1"/>
<dbReference type="EMBL" id="CP000253">
    <property type="protein sequence ID" value="ABD30352.1"/>
    <property type="molecule type" value="Genomic_DNA"/>
</dbReference>
<dbReference type="RefSeq" id="WP_000076690.1">
    <property type="nucleotide sequence ID" value="NZ_LS483365.1"/>
</dbReference>
<dbReference type="RefSeq" id="YP_499784.1">
    <property type="nucleotide sequence ID" value="NC_007795.1"/>
</dbReference>
<dbReference type="PDB" id="5XEX">
    <property type="method" value="X-ray"/>
    <property type="resolution" value="2.20 A"/>
    <property type="chains" value="A/B/C/D/E/F=1-553"/>
</dbReference>
<dbReference type="PDBsum" id="5XEX"/>
<dbReference type="SMR" id="Q2FZ20"/>
<dbReference type="STRING" id="93061.SAOUHSC_01251"/>
<dbReference type="PaxDb" id="1280-SAXN108_1278"/>
<dbReference type="GeneID" id="3919982"/>
<dbReference type="KEGG" id="sao:SAOUHSC_01251"/>
<dbReference type="PATRIC" id="fig|93061.5.peg.1145"/>
<dbReference type="eggNOG" id="COG1185">
    <property type="taxonomic scope" value="Bacteria"/>
</dbReference>
<dbReference type="HOGENOM" id="CLU_004217_2_2_9"/>
<dbReference type="OrthoDB" id="9804305at2"/>
<dbReference type="PRO" id="PR:Q2FZ20"/>
<dbReference type="Proteomes" id="UP000008816">
    <property type="component" value="Chromosome"/>
</dbReference>
<dbReference type="GO" id="GO:0005829">
    <property type="term" value="C:cytosol"/>
    <property type="evidence" value="ECO:0000318"/>
    <property type="project" value="GO_Central"/>
</dbReference>
<dbReference type="GO" id="GO:0000175">
    <property type="term" value="F:3'-5'-RNA exonuclease activity"/>
    <property type="evidence" value="ECO:0000318"/>
    <property type="project" value="GO_Central"/>
</dbReference>
<dbReference type="GO" id="GO:0000287">
    <property type="term" value="F:magnesium ion binding"/>
    <property type="evidence" value="ECO:0007669"/>
    <property type="project" value="UniProtKB-UniRule"/>
</dbReference>
<dbReference type="GO" id="GO:0004654">
    <property type="term" value="F:polyribonucleotide nucleotidyltransferase activity"/>
    <property type="evidence" value="ECO:0000318"/>
    <property type="project" value="GO_Central"/>
</dbReference>
<dbReference type="GO" id="GO:0003723">
    <property type="term" value="F:RNA binding"/>
    <property type="evidence" value="ECO:0007669"/>
    <property type="project" value="UniProtKB-UniRule"/>
</dbReference>
<dbReference type="GO" id="GO:0006402">
    <property type="term" value="P:mRNA catabolic process"/>
    <property type="evidence" value="ECO:0007669"/>
    <property type="project" value="UniProtKB-UniRule"/>
</dbReference>
<dbReference type="GO" id="GO:0006401">
    <property type="term" value="P:RNA catabolic process"/>
    <property type="evidence" value="ECO:0000318"/>
    <property type="project" value="GO_Central"/>
</dbReference>
<dbReference type="GO" id="GO:0006396">
    <property type="term" value="P:RNA processing"/>
    <property type="evidence" value="ECO:0007669"/>
    <property type="project" value="InterPro"/>
</dbReference>
<dbReference type="CDD" id="cd02393">
    <property type="entry name" value="KH-I_PNPase"/>
    <property type="match status" value="1"/>
</dbReference>
<dbReference type="CDD" id="cd11363">
    <property type="entry name" value="RNase_PH_PNPase_1"/>
    <property type="match status" value="1"/>
</dbReference>
<dbReference type="CDD" id="cd11364">
    <property type="entry name" value="RNase_PH_PNPase_2"/>
    <property type="match status" value="1"/>
</dbReference>
<dbReference type="CDD" id="cd04472">
    <property type="entry name" value="S1_PNPase"/>
    <property type="match status" value="1"/>
</dbReference>
<dbReference type="FunFam" id="2.40.50.140:FF:000023">
    <property type="entry name" value="Polyribonucleotide nucleotidyltransferase"/>
    <property type="match status" value="1"/>
</dbReference>
<dbReference type="FunFam" id="3.30.1370.10:FF:000001">
    <property type="entry name" value="Polyribonucleotide nucleotidyltransferase"/>
    <property type="match status" value="1"/>
</dbReference>
<dbReference type="FunFam" id="3.30.230.70:FF:000001">
    <property type="entry name" value="Polyribonucleotide nucleotidyltransferase"/>
    <property type="match status" value="1"/>
</dbReference>
<dbReference type="FunFam" id="3.30.230.70:FF:000002">
    <property type="entry name" value="Polyribonucleotide nucleotidyltransferase"/>
    <property type="match status" value="1"/>
</dbReference>
<dbReference type="Gene3D" id="3.30.230.70">
    <property type="entry name" value="GHMP Kinase, N-terminal domain"/>
    <property type="match status" value="2"/>
</dbReference>
<dbReference type="Gene3D" id="3.30.1370.10">
    <property type="entry name" value="K Homology domain, type 1"/>
    <property type="match status" value="1"/>
</dbReference>
<dbReference type="Gene3D" id="2.40.50.140">
    <property type="entry name" value="Nucleic acid-binding proteins"/>
    <property type="match status" value="1"/>
</dbReference>
<dbReference type="HAMAP" id="MF_01595">
    <property type="entry name" value="PNPase"/>
    <property type="match status" value="1"/>
</dbReference>
<dbReference type="InterPro" id="IPR001247">
    <property type="entry name" value="ExoRNase_PH_dom1"/>
</dbReference>
<dbReference type="InterPro" id="IPR015847">
    <property type="entry name" value="ExoRNase_PH_dom2"/>
</dbReference>
<dbReference type="InterPro" id="IPR036345">
    <property type="entry name" value="ExoRNase_PH_dom2_sf"/>
</dbReference>
<dbReference type="InterPro" id="IPR004087">
    <property type="entry name" value="KH_dom"/>
</dbReference>
<dbReference type="InterPro" id="IPR004088">
    <property type="entry name" value="KH_dom_type_1"/>
</dbReference>
<dbReference type="InterPro" id="IPR036612">
    <property type="entry name" value="KH_dom_type_1_sf"/>
</dbReference>
<dbReference type="InterPro" id="IPR012340">
    <property type="entry name" value="NA-bd_OB-fold"/>
</dbReference>
<dbReference type="InterPro" id="IPR012162">
    <property type="entry name" value="PNPase"/>
</dbReference>
<dbReference type="InterPro" id="IPR027408">
    <property type="entry name" value="PNPase/RNase_PH_dom_sf"/>
</dbReference>
<dbReference type="InterPro" id="IPR015848">
    <property type="entry name" value="PNPase_PH_RNA-bd_bac/org-type"/>
</dbReference>
<dbReference type="InterPro" id="IPR036456">
    <property type="entry name" value="PNPase_PH_RNA-bd_sf"/>
</dbReference>
<dbReference type="InterPro" id="IPR020568">
    <property type="entry name" value="Ribosomal_Su5_D2-typ_SF"/>
</dbReference>
<dbReference type="InterPro" id="IPR003029">
    <property type="entry name" value="S1_domain"/>
</dbReference>
<dbReference type="NCBIfam" id="TIGR03591">
    <property type="entry name" value="polynuc_phos"/>
    <property type="match status" value="1"/>
</dbReference>
<dbReference type="NCBIfam" id="NF008805">
    <property type="entry name" value="PRK11824.1"/>
    <property type="match status" value="1"/>
</dbReference>
<dbReference type="PANTHER" id="PTHR11252">
    <property type="entry name" value="POLYRIBONUCLEOTIDE NUCLEOTIDYLTRANSFERASE"/>
    <property type="match status" value="1"/>
</dbReference>
<dbReference type="PANTHER" id="PTHR11252:SF0">
    <property type="entry name" value="POLYRIBONUCLEOTIDE NUCLEOTIDYLTRANSFERASE 1, MITOCHONDRIAL"/>
    <property type="match status" value="1"/>
</dbReference>
<dbReference type="Pfam" id="PF00013">
    <property type="entry name" value="KH_1"/>
    <property type="match status" value="1"/>
</dbReference>
<dbReference type="Pfam" id="PF03726">
    <property type="entry name" value="PNPase"/>
    <property type="match status" value="1"/>
</dbReference>
<dbReference type="Pfam" id="PF01138">
    <property type="entry name" value="RNase_PH"/>
    <property type="match status" value="2"/>
</dbReference>
<dbReference type="Pfam" id="PF03725">
    <property type="entry name" value="RNase_PH_C"/>
    <property type="match status" value="2"/>
</dbReference>
<dbReference type="Pfam" id="PF00575">
    <property type="entry name" value="S1"/>
    <property type="match status" value="1"/>
</dbReference>
<dbReference type="PIRSF" id="PIRSF005499">
    <property type="entry name" value="PNPase"/>
    <property type="match status" value="1"/>
</dbReference>
<dbReference type="SMART" id="SM00322">
    <property type="entry name" value="KH"/>
    <property type="match status" value="1"/>
</dbReference>
<dbReference type="SMART" id="SM00316">
    <property type="entry name" value="S1"/>
    <property type="match status" value="1"/>
</dbReference>
<dbReference type="SUPFAM" id="SSF54791">
    <property type="entry name" value="Eukaryotic type KH-domain (KH-domain type I)"/>
    <property type="match status" value="1"/>
</dbReference>
<dbReference type="SUPFAM" id="SSF50249">
    <property type="entry name" value="Nucleic acid-binding proteins"/>
    <property type="match status" value="1"/>
</dbReference>
<dbReference type="SUPFAM" id="SSF46915">
    <property type="entry name" value="Polynucleotide phosphorylase/guanosine pentaphosphate synthase (PNPase/GPSI), domain 3"/>
    <property type="match status" value="1"/>
</dbReference>
<dbReference type="SUPFAM" id="SSF55666">
    <property type="entry name" value="Ribonuclease PH domain 2-like"/>
    <property type="match status" value="2"/>
</dbReference>
<dbReference type="SUPFAM" id="SSF54211">
    <property type="entry name" value="Ribosomal protein S5 domain 2-like"/>
    <property type="match status" value="2"/>
</dbReference>
<dbReference type="PROSITE" id="PS50084">
    <property type="entry name" value="KH_TYPE_1"/>
    <property type="match status" value="1"/>
</dbReference>
<dbReference type="PROSITE" id="PS50126">
    <property type="entry name" value="S1"/>
    <property type="match status" value="1"/>
</dbReference>
<organism>
    <name type="scientific">Staphylococcus aureus (strain NCTC 8325 / PS 47)</name>
    <dbReference type="NCBI Taxonomy" id="93061"/>
    <lineage>
        <taxon>Bacteria</taxon>
        <taxon>Bacillati</taxon>
        <taxon>Bacillota</taxon>
        <taxon>Bacilli</taxon>
        <taxon>Bacillales</taxon>
        <taxon>Staphylococcaceae</taxon>
        <taxon>Staphylococcus</taxon>
    </lineage>
</organism>
<accession>Q2FZ20</accession>
<sequence>MSQEKKVFKTEWAGRSLTIETGQLAKQANGAVLVRYGDTVVLSTATASKEPRDGDFFPLTVNYEEKMYAAGKIPGGFKKREGRPGDDATLTARLIDRPIRPLFPKGYKHDVQIMNMVLSADPDCSPQMAAMIGSSMALSVSDIPFQGPIAGVNVGYIDGKYIINPTVEEKEVSRLDLEVAGHKDAVNMVEAGASEITEQEMLEAIFFGHEEIQRLVDFQQQIVDHIQPVKQEFIPAERDEALVERVKSLTEEKGLKETVLTFDKQQRDENLDNLKEEIVNEFIDEEDPENELLIKEVYAILNELVKEEVRRLIADEKIRPDGRKPDEIRPLDSEVGILPRTHGSGLFTRGQTQALSVLTLGALGDYQLIDGLGPEEEKRFMHHYNFPNFSVGETGPVRAPGRREIGHGALGERALKYIIPDTADFPYTIRIVSEVLESNGSSSQASICGSTLALMDAGVPIKAPVAGIAMGLVTREDSYTILTDIQGMEDALGDMDFKVAGTKEGITAIQMDIKIDGLTREIIEEALEQARRGRLEIMNHMLQTIDQPRTELSAYAPKVVTMTIKPDKIRDVIGPGGKKINEIIDETGVKLDIEQDGTIFIGAVDQAMINRAREIIEEITREAEVGQTYQATVKRIEKYGAFVGLFPGKDALLHISQISKNRIEKVEDVLKIGDTIEVKITEIDKQGRVNASHRALEE</sequence>
<gene>
    <name evidence="1" type="primary">pnp</name>
    <name type="synonym">pnpA</name>
    <name type="ordered locus">SAOUHSC_01251</name>
</gene>
<comment type="function">
    <text evidence="1">Involved in mRNA degradation. Catalyzes the phosphorolysis of single-stranded polyribonucleotides processively in the 3'- to 5'-direction.</text>
</comment>
<comment type="catalytic activity">
    <reaction evidence="1">
        <text>RNA(n+1) + phosphate = RNA(n) + a ribonucleoside 5'-diphosphate</text>
        <dbReference type="Rhea" id="RHEA:22096"/>
        <dbReference type="Rhea" id="RHEA-COMP:14527"/>
        <dbReference type="Rhea" id="RHEA-COMP:17342"/>
        <dbReference type="ChEBI" id="CHEBI:43474"/>
        <dbReference type="ChEBI" id="CHEBI:57930"/>
        <dbReference type="ChEBI" id="CHEBI:140395"/>
        <dbReference type="EC" id="2.7.7.8"/>
    </reaction>
</comment>
<comment type="cofactor">
    <cofactor evidence="1">
        <name>Mg(2+)</name>
        <dbReference type="ChEBI" id="CHEBI:18420"/>
    </cofactor>
</comment>
<comment type="subunit">
    <text evidence="2 4">Homodimer (Probable). Component of a possible RNA degradosome complex composed of cshA, eno, pfkA, pnp, rnjA, rnjB, rnpA and rny. Interacts specifically RNA helicase CshA and RNase J1.</text>
</comment>
<comment type="subcellular location">
    <subcellularLocation>
        <location evidence="1">Cytoplasm</location>
    </subcellularLocation>
</comment>
<comment type="disruption phenotype">
    <text evidence="3">No visible phenotype.</text>
</comment>
<comment type="similarity">
    <text evidence="1">Belongs to the polyribonucleotide nucleotidyltransferase family.</text>
</comment>
<name>PNP_STAA8</name>
<proteinExistence type="evidence at protein level"/>
<protein>
    <recommendedName>
        <fullName evidence="1">Polyribonucleotide nucleotidyltransferase</fullName>
        <ecNumber evidence="1">2.7.7.8</ecNumber>
    </recommendedName>
    <alternativeName>
        <fullName evidence="1">Polynucleotide phosphorylase</fullName>
        <shortName evidence="1">PNPase</shortName>
    </alternativeName>
</protein>
<feature type="chain" id="PRO_0000260060" description="Polyribonucleotide nucleotidyltransferase">
    <location>
        <begin position="1"/>
        <end position="698"/>
    </location>
</feature>
<feature type="domain" description="KH" evidence="1">
    <location>
        <begin position="557"/>
        <end position="616"/>
    </location>
</feature>
<feature type="domain" description="S1 motif" evidence="1">
    <location>
        <begin position="626"/>
        <end position="694"/>
    </location>
</feature>
<feature type="binding site" evidence="1">
    <location>
        <position position="490"/>
    </location>
    <ligand>
        <name>Mg(2+)</name>
        <dbReference type="ChEBI" id="CHEBI:18420"/>
    </ligand>
</feature>
<feature type="binding site" evidence="1">
    <location>
        <position position="496"/>
    </location>
    <ligand>
        <name>Mg(2+)</name>
        <dbReference type="ChEBI" id="CHEBI:18420"/>
    </ligand>
</feature>
<feature type="strand" evidence="5">
    <location>
        <begin position="6"/>
        <end position="12"/>
    </location>
</feature>
<feature type="strand" evidence="5">
    <location>
        <begin position="15"/>
        <end position="24"/>
    </location>
</feature>
<feature type="strand" evidence="5">
    <location>
        <begin position="28"/>
        <end position="36"/>
    </location>
</feature>
<feature type="strand" evidence="5">
    <location>
        <begin position="39"/>
        <end position="47"/>
    </location>
</feature>
<feature type="strand" evidence="5">
    <location>
        <begin position="53"/>
        <end position="55"/>
    </location>
</feature>
<feature type="strand" evidence="5">
    <location>
        <begin position="59"/>
        <end position="61"/>
    </location>
</feature>
<feature type="helix" evidence="5">
    <location>
        <begin position="67"/>
        <end position="70"/>
    </location>
</feature>
<feature type="helix" evidence="5">
    <location>
        <begin position="87"/>
        <end position="99"/>
    </location>
</feature>
<feature type="helix" evidence="5">
    <location>
        <begin position="100"/>
        <end position="102"/>
    </location>
</feature>
<feature type="strand" evidence="5">
    <location>
        <begin position="111"/>
        <end position="119"/>
    </location>
</feature>
<feature type="helix" evidence="5">
    <location>
        <begin position="126"/>
        <end position="140"/>
    </location>
</feature>
<feature type="strand" evidence="5">
    <location>
        <begin position="141"/>
        <end position="143"/>
    </location>
</feature>
<feature type="strand" evidence="5">
    <location>
        <begin position="150"/>
        <end position="157"/>
    </location>
</feature>
<feature type="strand" evidence="5">
    <location>
        <begin position="160"/>
        <end position="164"/>
    </location>
</feature>
<feature type="helix" evidence="5">
    <location>
        <begin position="167"/>
        <end position="170"/>
    </location>
</feature>
<feature type="strand" evidence="5">
    <location>
        <begin position="174"/>
        <end position="181"/>
    </location>
</feature>
<feature type="strand" evidence="5">
    <location>
        <begin position="183"/>
        <end position="196"/>
    </location>
</feature>
<feature type="helix" evidence="5">
    <location>
        <begin position="198"/>
        <end position="226"/>
    </location>
</feature>
<feature type="helix" evidence="5">
    <location>
        <begin position="240"/>
        <end position="252"/>
    </location>
</feature>
<feature type="helix" evidence="5">
    <location>
        <begin position="255"/>
        <end position="259"/>
    </location>
</feature>
<feature type="helix" evidence="5">
    <location>
        <begin position="264"/>
        <end position="278"/>
    </location>
</feature>
<feature type="helix" evidence="5">
    <location>
        <begin position="292"/>
        <end position="316"/>
    </location>
</feature>
<feature type="strand" evidence="5">
    <location>
        <begin position="331"/>
        <end position="335"/>
    </location>
</feature>
<feature type="strand" evidence="5">
    <location>
        <begin position="338"/>
        <end position="349"/>
    </location>
</feature>
<feature type="strand" evidence="5">
    <location>
        <begin position="352"/>
        <end position="361"/>
    </location>
</feature>
<feature type="strand" evidence="5">
    <location>
        <begin position="380"/>
        <end position="385"/>
    </location>
</feature>
<feature type="helix" evidence="5">
    <location>
        <begin position="388"/>
        <end position="391"/>
    </location>
</feature>
<feature type="helix" evidence="5">
    <location>
        <begin position="402"/>
        <end position="416"/>
    </location>
</feature>
<feature type="turn" evidence="5">
    <location>
        <begin position="422"/>
        <end position="424"/>
    </location>
</feature>
<feature type="strand" evidence="5">
    <location>
        <begin position="428"/>
        <end position="437"/>
    </location>
</feature>
<feature type="helix" evidence="5">
    <location>
        <begin position="442"/>
        <end position="456"/>
    </location>
</feature>
<feature type="strand" evidence="5">
    <location>
        <begin position="466"/>
        <end position="474"/>
    </location>
</feature>
<feature type="strand" evidence="5">
    <location>
        <begin position="479"/>
        <end position="484"/>
    </location>
</feature>
<feature type="helix" evidence="5">
    <location>
        <begin position="487"/>
        <end position="492"/>
    </location>
</feature>
<feature type="strand" evidence="5">
    <location>
        <begin position="493"/>
        <end position="501"/>
    </location>
</feature>
<feature type="strand" evidence="5">
    <location>
        <begin position="506"/>
        <end position="516"/>
    </location>
</feature>
<feature type="helix" evidence="5">
    <location>
        <begin position="520"/>
        <end position="544"/>
    </location>
</feature>
<reference key="1">
    <citation type="book" date="2006" name="Gram positive pathogens, 2nd edition">
        <title>The Staphylococcus aureus NCTC 8325 genome.</title>
        <editorList>
            <person name="Fischetti V."/>
            <person name="Novick R."/>
            <person name="Ferretti J."/>
            <person name="Portnoy D."/>
            <person name="Rood J."/>
        </editorList>
        <authorList>
            <person name="Gillaspy A.F."/>
            <person name="Worrell V."/>
            <person name="Orvis J."/>
            <person name="Roe B.A."/>
            <person name="Dyer D.W."/>
            <person name="Iandolo J.J."/>
        </authorList>
    </citation>
    <scope>NUCLEOTIDE SEQUENCE [LARGE SCALE GENOMIC DNA]</scope>
    <source>
        <strain>NCTC 8325 / PS 47</strain>
    </source>
</reference>
<reference key="2">
    <citation type="journal article" date="2011" name="J. Bacteriol.">
        <title>Characterization of components of the Staphylococcus aureus mRNA degradosome holoenzyme-like complex.</title>
        <authorList>
            <person name="Roux C.M."/>
            <person name="DeMuth J.P."/>
            <person name="Dunman P.M."/>
        </authorList>
    </citation>
    <scope>INTERACTION WITH ENO AND RNJA</scope>
    <scope>SUBUNIT</scope>
    <source>
        <strain>UAMS-1</strain>
    </source>
</reference>
<reference key="3">
    <citation type="journal article" date="2012" name="Appl. Environ. Microbiol.">
        <title>New range of vectors with a stringent 5-fluoroorotic acid-based counterselection system for generating mutants by allelic replacement in Staphylococcus aureus.</title>
        <authorList>
            <person name="Redder P."/>
            <person name="Linder P."/>
        </authorList>
    </citation>
    <scope>DISRUPTION PHENOTYPE</scope>
    <source>
        <strain>SA564</strain>
    </source>
</reference>
<keyword id="KW-0002">3D-structure</keyword>
<keyword id="KW-0963">Cytoplasm</keyword>
<keyword id="KW-0460">Magnesium</keyword>
<keyword id="KW-0479">Metal-binding</keyword>
<keyword id="KW-0548">Nucleotidyltransferase</keyword>
<keyword id="KW-1185">Reference proteome</keyword>
<keyword id="KW-0694">RNA-binding</keyword>
<keyword id="KW-0808">Transferase</keyword>
<evidence type="ECO:0000255" key="1">
    <source>
        <dbReference type="HAMAP-Rule" id="MF_01595"/>
    </source>
</evidence>
<evidence type="ECO:0000269" key="2">
    <source>
    </source>
</evidence>
<evidence type="ECO:0000269" key="3">
    <source>
    </source>
</evidence>
<evidence type="ECO:0000305" key="4"/>
<evidence type="ECO:0007829" key="5">
    <source>
        <dbReference type="PDB" id="5XEX"/>
    </source>
</evidence>